<keyword id="KW-0002">3D-structure</keyword>
<keyword id="KW-0413">Isomerase</keyword>
<keyword id="KW-1185">Reference proteome</keyword>
<evidence type="ECO:0000255" key="1">
    <source>
        <dbReference type="HAMAP-Rule" id="MF_01951"/>
    </source>
</evidence>
<evidence type="ECO:0007829" key="2">
    <source>
        <dbReference type="PDB" id="3CQH"/>
    </source>
</evidence>
<evidence type="ECO:0007829" key="3">
    <source>
        <dbReference type="PDB" id="3CQJ"/>
    </source>
</evidence>
<feature type="chain" id="PRO_0000233251" description="L-ribulose-5-phosphate 3-epimerase UlaE">
    <location>
        <begin position="1"/>
        <end position="284"/>
    </location>
</feature>
<feature type="strand" evidence="3">
    <location>
        <begin position="8"/>
        <end position="11"/>
    </location>
</feature>
<feature type="helix" evidence="3">
    <location>
        <begin position="12"/>
        <end position="14"/>
    </location>
</feature>
<feature type="helix" evidence="3">
    <location>
        <begin position="21"/>
        <end position="30"/>
    </location>
</feature>
<feature type="strand" evidence="3">
    <location>
        <begin position="34"/>
        <end position="39"/>
    </location>
</feature>
<feature type="helix" evidence="3">
    <location>
        <begin position="44"/>
        <end position="47"/>
    </location>
</feature>
<feature type="helix" evidence="3">
    <location>
        <begin position="48"/>
        <end position="51"/>
    </location>
</feature>
<feature type="helix" evidence="3">
    <location>
        <begin position="54"/>
        <end position="67"/>
    </location>
</feature>
<feature type="strand" evidence="3">
    <location>
        <begin position="70"/>
        <end position="76"/>
    </location>
</feature>
<feature type="helix" evidence="3">
    <location>
        <begin position="77"/>
        <end position="80"/>
    </location>
</feature>
<feature type="helix" evidence="3">
    <location>
        <begin position="89"/>
        <end position="109"/>
    </location>
</feature>
<feature type="strand" evidence="3">
    <location>
        <begin position="113"/>
        <end position="116"/>
    </location>
</feature>
<feature type="strand" evidence="3">
    <location>
        <begin position="122"/>
        <end position="124"/>
    </location>
</feature>
<feature type="helix" evidence="3">
    <location>
        <begin position="128"/>
        <end position="148"/>
    </location>
</feature>
<feature type="strand" evidence="3">
    <location>
        <begin position="151"/>
        <end position="155"/>
    </location>
</feature>
<feature type="helix" evidence="3">
    <location>
        <begin position="160"/>
        <end position="162"/>
    </location>
</feature>
<feature type="helix" evidence="3">
    <location>
        <begin position="165"/>
        <end position="175"/>
    </location>
</feature>
<feature type="strand" evidence="3">
    <location>
        <begin position="180"/>
        <end position="183"/>
    </location>
</feature>
<feature type="helix" evidence="3">
    <location>
        <begin position="186"/>
        <end position="190"/>
    </location>
</feature>
<feature type="strand" evidence="3">
    <location>
        <begin position="191"/>
        <end position="193"/>
    </location>
</feature>
<feature type="helix" evidence="3">
    <location>
        <begin position="196"/>
        <end position="202"/>
    </location>
</feature>
<feature type="helix" evidence="3">
    <location>
        <begin position="204"/>
        <end position="206"/>
    </location>
</feature>
<feature type="strand" evidence="3">
    <location>
        <begin position="210"/>
        <end position="212"/>
    </location>
</feature>
<feature type="strand" evidence="3">
    <location>
        <begin position="214"/>
        <end position="216"/>
    </location>
</feature>
<feature type="strand" evidence="3">
    <location>
        <begin position="219"/>
        <end position="223"/>
    </location>
</feature>
<feature type="strand" evidence="3">
    <location>
        <begin position="227"/>
        <end position="229"/>
    </location>
</feature>
<feature type="helix" evidence="3">
    <location>
        <begin position="232"/>
        <end position="241"/>
    </location>
</feature>
<feature type="strand" evidence="3">
    <location>
        <begin position="248"/>
        <end position="250"/>
    </location>
</feature>
<feature type="helix" evidence="3">
    <location>
        <begin position="254"/>
        <end position="256"/>
    </location>
</feature>
<feature type="strand" evidence="2">
    <location>
        <begin position="257"/>
        <end position="259"/>
    </location>
</feature>
<feature type="helix" evidence="3">
    <location>
        <begin position="260"/>
        <end position="277"/>
    </location>
</feature>
<reference key="1">
    <citation type="journal article" date="2001" name="Nature">
        <title>Genome sequence of enterohaemorrhagic Escherichia coli O157:H7.</title>
        <authorList>
            <person name="Perna N.T."/>
            <person name="Plunkett G. III"/>
            <person name="Burland V."/>
            <person name="Mau B."/>
            <person name="Glasner J.D."/>
            <person name="Rose D.J."/>
            <person name="Mayhew G.F."/>
            <person name="Evans P.S."/>
            <person name="Gregor J."/>
            <person name="Kirkpatrick H.A."/>
            <person name="Posfai G."/>
            <person name="Hackett J."/>
            <person name="Klink S."/>
            <person name="Boutin A."/>
            <person name="Shao Y."/>
            <person name="Miller L."/>
            <person name="Grotbeck E.J."/>
            <person name="Davis N.W."/>
            <person name="Lim A."/>
            <person name="Dimalanta E.T."/>
            <person name="Potamousis K."/>
            <person name="Apodaca J."/>
            <person name="Anantharaman T.S."/>
            <person name="Lin J."/>
            <person name="Yen G."/>
            <person name="Schwartz D.C."/>
            <person name="Welch R.A."/>
            <person name="Blattner F.R."/>
        </authorList>
    </citation>
    <scope>NUCLEOTIDE SEQUENCE [LARGE SCALE GENOMIC DNA]</scope>
    <source>
        <strain>O157:H7 / EDL933 / ATCC 700927 / EHEC</strain>
    </source>
</reference>
<reference key="2">
    <citation type="journal article" date="2001" name="DNA Res.">
        <title>Complete genome sequence of enterohemorrhagic Escherichia coli O157:H7 and genomic comparison with a laboratory strain K-12.</title>
        <authorList>
            <person name="Hayashi T."/>
            <person name="Makino K."/>
            <person name="Ohnishi M."/>
            <person name="Kurokawa K."/>
            <person name="Ishii K."/>
            <person name="Yokoyama K."/>
            <person name="Han C.-G."/>
            <person name="Ohtsubo E."/>
            <person name="Nakayama K."/>
            <person name="Murata T."/>
            <person name="Tanaka M."/>
            <person name="Tobe T."/>
            <person name="Iida T."/>
            <person name="Takami H."/>
            <person name="Honda T."/>
            <person name="Sasakawa C."/>
            <person name="Ogasawara N."/>
            <person name="Yasunaga T."/>
            <person name="Kuhara S."/>
            <person name="Shiba T."/>
            <person name="Hattori M."/>
            <person name="Shinagawa H."/>
        </authorList>
    </citation>
    <scope>NUCLEOTIDE SEQUENCE [LARGE SCALE GENOMIC DNA]</scope>
    <source>
        <strain>O157:H7 / Sakai / RIMD 0509952 / EHEC</strain>
    </source>
</reference>
<organism>
    <name type="scientific">Escherichia coli O157:H7</name>
    <dbReference type="NCBI Taxonomy" id="83334"/>
    <lineage>
        <taxon>Bacteria</taxon>
        <taxon>Pseudomonadati</taxon>
        <taxon>Pseudomonadota</taxon>
        <taxon>Gammaproteobacteria</taxon>
        <taxon>Enterobacterales</taxon>
        <taxon>Enterobacteriaceae</taxon>
        <taxon>Escherichia</taxon>
    </lineage>
</organism>
<accession>Q8XDI5</accession>
<accession>Q7A8U6</accession>
<comment type="function">
    <text evidence="1">Catalyzes the isomerization of L-xylulose-5-phosphate to L-ribulose-5-phosphate. Is involved in the anaerobic L-ascorbate utilization.</text>
</comment>
<comment type="catalytic activity">
    <reaction evidence="1">
        <text>L-ribulose 5-phosphate = L-xylulose 5-phosphate</text>
        <dbReference type="Rhea" id="RHEA:18497"/>
        <dbReference type="ChEBI" id="CHEBI:57829"/>
        <dbReference type="ChEBI" id="CHEBI:58226"/>
        <dbReference type="EC" id="5.1.3.22"/>
    </reaction>
</comment>
<comment type="pathway">
    <text evidence="1">Cofactor degradation; L-ascorbate degradation; D-xylulose 5-phosphate from L-ascorbate: step 3/4.</text>
</comment>
<comment type="induction">
    <text evidence="1">Induced by L-ascorbate. Repressed by UlaR.</text>
</comment>
<comment type="similarity">
    <text evidence="1">Belongs to the L-ribulose-5-phosphate 3-epimerase family.</text>
</comment>
<name>ULAE_ECO57</name>
<sequence>MLSKQIPLGIYEKALPAGECWLERLQLAKTLGFDFVEMSVDETDERLSRLDWSREQRLALVNAIVETGVRVPSMCLSAHRRFPLGSEDDAVRAQGLEIMRKAIQFAQDVGIRVIQLAGYDVYYQEANNETRRRFRDGLKESVEMASRAQVTLAMEIMDYPLMNSISKALGYAHYLNNPWFQLYPDIGNLSAWDNDVQMELQAGIGHIVAVHVKDTKPGVFKNVPFGEGVVDFERCFETLKQSGYCGPYLIEMWSETAEDPAAEVAKARDWVKARMAKAGMVEAA</sequence>
<gene>
    <name evidence="1" type="primary">ulaE</name>
    <name type="ordered locus">Z5806</name>
    <name type="ordered locus">ECs5173</name>
</gene>
<protein>
    <recommendedName>
        <fullName evidence="1">L-ribulose-5-phosphate 3-epimerase UlaE</fullName>
        <ecNumber evidence="1">5.1.3.22</ecNumber>
    </recommendedName>
    <alternativeName>
        <fullName evidence="1">L-ascorbate utilization protein E</fullName>
    </alternativeName>
    <alternativeName>
        <fullName evidence="1">L-xylulose-5-phosphate 3-epimerase</fullName>
    </alternativeName>
</protein>
<dbReference type="EC" id="5.1.3.22" evidence="1"/>
<dbReference type="EMBL" id="AE005174">
    <property type="protein sequence ID" value="AAG59393.1"/>
    <property type="molecule type" value="Genomic_DNA"/>
</dbReference>
<dbReference type="EMBL" id="BA000007">
    <property type="protein sequence ID" value="BAB38596.1"/>
    <property type="molecule type" value="Genomic_DNA"/>
</dbReference>
<dbReference type="PIR" id="E86116">
    <property type="entry name" value="E86116"/>
</dbReference>
<dbReference type="PIR" id="E91275">
    <property type="entry name" value="E91275"/>
</dbReference>
<dbReference type="RefSeq" id="NP_313200.1">
    <property type="nucleotide sequence ID" value="NC_002695.1"/>
</dbReference>
<dbReference type="RefSeq" id="WP_000949511.1">
    <property type="nucleotide sequence ID" value="NZ_VOAI01000008.1"/>
</dbReference>
<dbReference type="PDB" id="3CQH">
    <property type="method" value="X-ray"/>
    <property type="resolution" value="2.08 A"/>
    <property type="chains" value="A/B=2-284"/>
</dbReference>
<dbReference type="PDB" id="3CQI">
    <property type="method" value="X-ray"/>
    <property type="resolution" value="2.10 A"/>
    <property type="chains" value="A/B=2-284"/>
</dbReference>
<dbReference type="PDB" id="3CQJ">
    <property type="method" value="X-ray"/>
    <property type="resolution" value="2.04 A"/>
    <property type="chains" value="A/B=2-284"/>
</dbReference>
<dbReference type="PDB" id="3CQK">
    <property type="method" value="X-ray"/>
    <property type="resolution" value="2.33 A"/>
    <property type="chains" value="A/B=2-284"/>
</dbReference>
<dbReference type="PDBsum" id="3CQH"/>
<dbReference type="PDBsum" id="3CQI"/>
<dbReference type="PDBsum" id="3CQJ"/>
<dbReference type="PDBsum" id="3CQK"/>
<dbReference type="SMR" id="Q8XDI5"/>
<dbReference type="STRING" id="155864.Z5806"/>
<dbReference type="GeneID" id="913998"/>
<dbReference type="KEGG" id="ece:Z5806"/>
<dbReference type="KEGG" id="ecs:ECs_5173"/>
<dbReference type="PATRIC" id="fig|386585.9.peg.5407"/>
<dbReference type="eggNOG" id="COG3623">
    <property type="taxonomic scope" value="Bacteria"/>
</dbReference>
<dbReference type="HOGENOM" id="CLU_082738_0_0_6"/>
<dbReference type="OMA" id="QAGMGHI"/>
<dbReference type="UniPathway" id="UPA00263">
    <property type="reaction ID" value="UER00379"/>
</dbReference>
<dbReference type="EvolutionaryTrace" id="Q8XDI5"/>
<dbReference type="Proteomes" id="UP000000558">
    <property type="component" value="Chromosome"/>
</dbReference>
<dbReference type="Proteomes" id="UP000002519">
    <property type="component" value="Chromosome"/>
</dbReference>
<dbReference type="GO" id="GO:0016861">
    <property type="term" value="F:intramolecular oxidoreductase activity, interconverting aldoses and ketoses"/>
    <property type="evidence" value="ECO:0007669"/>
    <property type="project" value="InterPro"/>
</dbReference>
<dbReference type="GO" id="GO:0034015">
    <property type="term" value="F:L-ribulose-5-phosphate 3-epimerase activity"/>
    <property type="evidence" value="ECO:0007669"/>
    <property type="project" value="UniProtKB-UniRule"/>
</dbReference>
<dbReference type="GO" id="GO:0019854">
    <property type="term" value="P:L-ascorbic acid catabolic process"/>
    <property type="evidence" value="ECO:0007669"/>
    <property type="project" value="UniProtKB-UniRule"/>
</dbReference>
<dbReference type="FunFam" id="3.20.20.150:FF:000003">
    <property type="entry name" value="L-ribulose-5-phosphate 3-epimerase UlaE"/>
    <property type="match status" value="1"/>
</dbReference>
<dbReference type="Gene3D" id="3.20.20.150">
    <property type="entry name" value="Divalent-metal-dependent TIM barrel enzymes"/>
    <property type="match status" value="1"/>
</dbReference>
<dbReference type="HAMAP" id="MF_01951">
    <property type="entry name" value="UlaE"/>
    <property type="match status" value="1"/>
</dbReference>
<dbReference type="InterPro" id="IPR004560">
    <property type="entry name" value="L-Ru-5P_3-Epase"/>
</dbReference>
<dbReference type="InterPro" id="IPR023492">
    <property type="entry name" value="L-Ru-5P_3-Epase_Enterobacteria"/>
</dbReference>
<dbReference type="InterPro" id="IPR050417">
    <property type="entry name" value="Sugar_Epim/Isomerase"/>
</dbReference>
<dbReference type="InterPro" id="IPR036237">
    <property type="entry name" value="Xyl_isomerase-like_sf"/>
</dbReference>
<dbReference type="InterPro" id="IPR013022">
    <property type="entry name" value="Xyl_isomerase-like_TIM-brl"/>
</dbReference>
<dbReference type="NCBIfam" id="TIGR00542">
    <property type="entry name" value="hxl6Piso_put"/>
    <property type="match status" value="1"/>
</dbReference>
<dbReference type="NCBIfam" id="NF009688">
    <property type="entry name" value="PRK13209.1"/>
    <property type="match status" value="1"/>
</dbReference>
<dbReference type="NCBIfam" id="NF009689">
    <property type="entry name" value="PRK13210.1"/>
    <property type="match status" value="1"/>
</dbReference>
<dbReference type="PANTHER" id="PTHR43489">
    <property type="entry name" value="ISOMERASE"/>
    <property type="match status" value="1"/>
</dbReference>
<dbReference type="PANTHER" id="PTHR43489:SF8">
    <property type="entry name" value="L-RIBULOSE-5-PHOSPHATE 3-EPIMERASE ULAE"/>
    <property type="match status" value="1"/>
</dbReference>
<dbReference type="Pfam" id="PF01261">
    <property type="entry name" value="AP_endonuc_2"/>
    <property type="match status" value="1"/>
</dbReference>
<dbReference type="SUPFAM" id="SSF51658">
    <property type="entry name" value="Xylose isomerase-like"/>
    <property type="match status" value="1"/>
</dbReference>
<proteinExistence type="evidence at protein level"/>